<keyword id="KW-0963">Cytoplasm</keyword>
<keyword id="KW-0235">DNA replication</keyword>
<keyword id="KW-0238">DNA-binding</keyword>
<keyword id="KW-0239">DNA-directed DNA polymerase</keyword>
<keyword id="KW-0548">Nucleotidyltransferase</keyword>
<keyword id="KW-0808">Transferase</keyword>
<sequence length="377" mass="41914">MMEFTIKRDYFITQLNDTLKAISPRTTLPILTGIKIDAKEHEVILTGSDSEISIEITIPKTVDGEDIVNISETGSVVLPGRFFVDIIKKLPGKDVKLSTNEQFQTLITSGHSEFNLSGLDPDQYPLLPQVSRDDAIQLSVKVLKNVIAQTNFAVSTSETRPVLTGVNWLIQENELICTATDSHRLAVRKLQLEDVSENKNVIIPGKALAELNKIMSDNEEDIDIFFASNQVLFKVGNVNFISRLLEGHYPDTTRLFPENYEIKLSIDNGEFYHAIDRASLLAREGGNNVIKLSTGDDVVELSSTSPEIGTVKEEVDANDVEGGSLKISFNSKYMMDALKAIDNDEVEVEFFGTMKPFILKPKGDDSVTQLILPIRTY</sequence>
<dbReference type="EMBL" id="BX571856">
    <property type="protein sequence ID" value="CAG39030.1"/>
    <property type="molecule type" value="Genomic_DNA"/>
</dbReference>
<dbReference type="RefSeq" id="WP_000969811.1">
    <property type="nucleotide sequence ID" value="NC_002952.2"/>
</dbReference>
<dbReference type="SMR" id="Q6GKU3"/>
<dbReference type="KEGG" id="sar:SAR0002"/>
<dbReference type="HOGENOM" id="CLU_038149_2_0_9"/>
<dbReference type="Proteomes" id="UP000000596">
    <property type="component" value="Chromosome"/>
</dbReference>
<dbReference type="GO" id="GO:0005737">
    <property type="term" value="C:cytoplasm"/>
    <property type="evidence" value="ECO:0007669"/>
    <property type="project" value="UniProtKB-SubCell"/>
</dbReference>
<dbReference type="GO" id="GO:0009360">
    <property type="term" value="C:DNA polymerase III complex"/>
    <property type="evidence" value="ECO:0007669"/>
    <property type="project" value="InterPro"/>
</dbReference>
<dbReference type="GO" id="GO:0008408">
    <property type="term" value="F:3'-5' exonuclease activity"/>
    <property type="evidence" value="ECO:0007669"/>
    <property type="project" value="InterPro"/>
</dbReference>
<dbReference type="GO" id="GO:0003677">
    <property type="term" value="F:DNA binding"/>
    <property type="evidence" value="ECO:0007669"/>
    <property type="project" value="UniProtKB-KW"/>
</dbReference>
<dbReference type="GO" id="GO:0003887">
    <property type="term" value="F:DNA-directed DNA polymerase activity"/>
    <property type="evidence" value="ECO:0007669"/>
    <property type="project" value="UniProtKB-KW"/>
</dbReference>
<dbReference type="GO" id="GO:0006271">
    <property type="term" value="P:DNA strand elongation involved in DNA replication"/>
    <property type="evidence" value="ECO:0007669"/>
    <property type="project" value="TreeGrafter"/>
</dbReference>
<dbReference type="CDD" id="cd00140">
    <property type="entry name" value="beta_clamp"/>
    <property type="match status" value="1"/>
</dbReference>
<dbReference type="FunFam" id="3.10.150.10:FF:000007">
    <property type="entry name" value="Beta sliding clamp"/>
    <property type="match status" value="1"/>
</dbReference>
<dbReference type="Gene3D" id="3.70.10.10">
    <property type="match status" value="1"/>
</dbReference>
<dbReference type="Gene3D" id="3.10.150.10">
    <property type="entry name" value="DNA Polymerase III, subunit A, domain 2"/>
    <property type="match status" value="1"/>
</dbReference>
<dbReference type="InterPro" id="IPR046938">
    <property type="entry name" value="DNA_clamp_sf"/>
</dbReference>
<dbReference type="InterPro" id="IPR001001">
    <property type="entry name" value="DNA_polIII_beta"/>
</dbReference>
<dbReference type="InterPro" id="IPR022635">
    <property type="entry name" value="DNA_polIII_beta_C"/>
</dbReference>
<dbReference type="InterPro" id="IPR022637">
    <property type="entry name" value="DNA_polIII_beta_cen"/>
</dbReference>
<dbReference type="InterPro" id="IPR022634">
    <property type="entry name" value="DNA_polIII_beta_N"/>
</dbReference>
<dbReference type="NCBIfam" id="TIGR00663">
    <property type="entry name" value="dnan"/>
    <property type="match status" value="1"/>
</dbReference>
<dbReference type="PANTHER" id="PTHR30478:SF0">
    <property type="entry name" value="BETA SLIDING CLAMP"/>
    <property type="match status" value="1"/>
</dbReference>
<dbReference type="PANTHER" id="PTHR30478">
    <property type="entry name" value="DNA POLYMERASE III SUBUNIT BETA"/>
    <property type="match status" value="1"/>
</dbReference>
<dbReference type="Pfam" id="PF00712">
    <property type="entry name" value="DNA_pol3_beta"/>
    <property type="match status" value="1"/>
</dbReference>
<dbReference type="Pfam" id="PF02767">
    <property type="entry name" value="DNA_pol3_beta_2"/>
    <property type="match status" value="1"/>
</dbReference>
<dbReference type="Pfam" id="PF02768">
    <property type="entry name" value="DNA_pol3_beta_3"/>
    <property type="match status" value="1"/>
</dbReference>
<dbReference type="PIRSF" id="PIRSF000804">
    <property type="entry name" value="DNA_pol_III_b"/>
    <property type="match status" value="1"/>
</dbReference>
<dbReference type="SMART" id="SM00480">
    <property type="entry name" value="POL3Bc"/>
    <property type="match status" value="1"/>
</dbReference>
<dbReference type="SUPFAM" id="SSF55979">
    <property type="entry name" value="DNA clamp"/>
    <property type="match status" value="3"/>
</dbReference>
<accession>Q6GKU3</accession>
<name>DPO3B_STAAR</name>
<proteinExistence type="inferred from homology"/>
<comment type="function">
    <text evidence="1">Confers DNA tethering and processivity to DNA polymerases and other proteins. Acts as a clamp, forming a ring around DNA (a reaction catalyzed by the clamp-loading complex) which diffuses in an ATP-independent manner freely and bidirectionally along dsDNA. Initially characterized for its ability to contact the catalytic subunit of DNA polymerase III (Pol III), a complex, multichain enzyme responsible for most of the replicative synthesis in bacteria; Pol III exhibits 3'-5' exonuclease proofreading activity. The beta chain is required for initiation of replication as well as for processivity of DNA replication.</text>
</comment>
<comment type="subunit">
    <text evidence="1">Forms a ring-shaped head-to-tail homodimer around DNA which binds and tethers DNA polymerases and other proteins to the DNA. The DNA replisome complex has a single clamp-loading complex (3 tau and 1 each of delta, delta', psi and chi subunits) which binds 3 Pol III cores (1 core on the leading strand and 2 on the lagging strand) each with a beta sliding clamp dimer. Additional proteins in the replisome are other copies of gamma, psi and chi, Ssb, DNA helicase and RNA primase.</text>
</comment>
<comment type="subcellular location">
    <subcellularLocation>
        <location evidence="1">Cytoplasm</location>
    </subcellularLocation>
</comment>
<comment type="similarity">
    <text evidence="2">Belongs to the beta sliding clamp family.</text>
</comment>
<evidence type="ECO:0000250" key="1">
    <source>
        <dbReference type="UniProtKB" id="P0A988"/>
    </source>
</evidence>
<evidence type="ECO:0000305" key="2"/>
<feature type="chain" id="PRO_0000105465" description="Beta sliding clamp">
    <location>
        <begin position="1"/>
        <end position="377"/>
    </location>
</feature>
<protein>
    <recommendedName>
        <fullName>Beta sliding clamp</fullName>
        <shortName>Beta clamp</shortName>
        <shortName>Sliding clamp</shortName>
    </recommendedName>
    <alternativeName>
        <fullName>Beta-clamp processivity factor</fullName>
    </alternativeName>
    <alternativeName>
        <fullName>DNA polymerase III beta sliding clamp subunit</fullName>
    </alternativeName>
    <alternativeName>
        <fullName>DNA polymerase III subunit beta</fullName>
    </alternativeName>
</protein>
<gene>
    <name type="primary">dnaN</name>
    <name type="ordered locus">SAR0002</name>
</gene>
<reference key="1">
    <citation type="journal article" date="2004" name="Proc. Natl. Acad. Sci. U.S.A.">
        <title>Complete genomes of two clinical Staphylococcus aureus strains: evidence for the rapid evolution of virulence and drug resistance.</title>
        <authorList>
            <person name="Holden M.T.G."/>
            <person name="Feil E.J."/>
            <person name="Lindsay J.A."/>
            <person name="Peacock S.J."/>
            <person name="Day N.P.J."/>
            <person name="Enright M.C."/>
            <person name="Foster T.J."/>
            <person name="Moore C.E."/>
            <person name="Hurst L."/>
            <person name="Atkin R."/>
            <person name="Barron A."/>
            <person name="Bason N."/>
            <person name="Bentley S.D."/>
            <person name="Chillingworth C."/>
            <person name="Chillingworth T."/>
            <person name="Churcher C."/>
            <person name="Clark L."/>
            <person name="Corton C."/>
            <person name="Cronin A."/>
            <person name="Doggett J."/>
            <person name="Dowd L."/>
            <person name="Feltwell T."/>
            <person name="Hance Z."/>
            <person name="Harris B."/>
            <person name="Hauser H."/>
            <person name="Holroyd S."/>
            <person name="Jagels K."/>
            <person name="James K.D."/>
            <person name="Lennard N."/>
            <person name="Line A."/>
            <person name="Mayes R."/>
            <person name="Moule S."/>
            <person name="Mungall K."/>
            <person name="Ormond D."/>
            <person name="Quail M.A."/>
            <person name="Rabbinowitsch E."/>
            <person name="Rutherford K.M."/>
            <person name="Sanders M."/>
            <person name="Sharp S."/>
            <person name="Simmonds M."/>
            <person name="Stevens K."/>
            <person name="Whitehead S."/>
            <person name="Barrell B.G."/>
            <person name="Spratt B.G."/>
            <person name="Parkhill J."/>
        </authorList>
    </citation>
    <scope>NUCLEOTIDE SEQUENCE [LARGE SCALE GENOMIC DNA]</scope>
    <source>
        <strain>MRSA252</strain>
    </source>
</reference>
<organism>
    <name type="scientific">Staphylococcus aureus (strain MRSA252)</name>
    <dbReference type="NCBI Taxonomy" id="282458"/>
    <lineage>
        <taxon>Bacteria</taxon>
        <taxon>Bacillati</taxon>
        <taxon>Bacillota</taxon>
        <taxon>Bacilli</taxon>
        <taxon>Bacillales</taxon>
        <taxon>Staphylococcaceae</taxon>
        <taxon>Staphylococcus</taxon>
    </lineage>
</organism>